<comment type="function">
    <text evidence="1">F(1)F(0) ATP synthase produces ATP from ADP in the presence of a proton or sodium gradient. F-type ATPases consist of two structural domains, F(1) containing the extramembraneous catalytic core and F(0) containing the membrane proton channel, linked together by a central stalk and a peripheral stalk. During catalysis, ATP synthesis in the catalytic domain of F(1) is coupled via a rotary mechanism of the central stalk subunits to proton translocation.</text>
</comment>
<comment type="function">
    <text evidence="1">This protein is part of the stalk that links CF(0) to CF(1). It either transmits conformational changes from CF(0) to CF(1) or is implicated in proton conduction.</text>
</comment>
<comment type="subunit">
    <text evidence="1">F-type ATPases have 2 components, F(1) - the catalytic core - and F(0) - the membrane proton channel. F(1) has five subunits: alpha(3), beta(3), gamma(1), delta(1), epsilon(1). F(0) has three main subunits: a(1), b(2) and c(10-14). The alpha and beta chains form an alternating ring which encloses part of the gamma chain. F(1) is attached to F(0) by a central stalk formed by the gamma and epsilon chains, while a peripheral stalk is formed by the delta and b chains.</text>
</comment>
<comment type="subcellular location">
    <subcellularLocation>
        <location evidence="1">Cell inner membrane</location>
        <topology evidence="1">Peripheral membrane protein</topology>
    </subcellularLocation>
</comment>
<comment type="similarity">
    <text evidence="1">Belongs to the ATPase delta chain family.</text>
</comment>
<feature type="chain" id="PRO_0000382105" description="ATP synthase subunit delta">
    <location>
        <begin position="1"/>
        <end position="181"/>
    </location>
</feature>
<keyword id="KW-0066">ATP synthesis</keyword>
<keyword id="KW-0997">Cell inner membrane</keyword>
<keyword id="KW-1003">Cell membrane</keyword>
<keyword id="KW-0139">CF(1)</keyword>
<keyword id="KW-0375">Hydrogen ion transport</keyword>
<keyword id="KW-0406">Ion transport</keyword>
<keyword id="KW-0472">Membrane</keyword>
<keyword id="KW-1185">Reference proteome</keyword>
<keyword id="KW-0813">Transport</keyword>
<evidence type="ECO:0000255" key="1">
    <source>
        <dbReference type="HAMAP-Rule" id="MF_01416"/>
    </source>
</evidence>
<accession>Q0C0Z7</accession>
<protein>
    <recommendedName>
        <fullName evidence="1">ATP synthase subunit delta</fullName>
    </recommendedName>
    <alternativeName>
        <fullName evidence="1">ATP synthase F(1) sector subunit delta</fullName>
    </alternativeName>
    <alternativeName>
        <fullName evidence="1">F-type ATPase subunit delta</fullName>
        <shortName evidence="1">F-ATPase subunit delta</shortName>
    </alternativeName>
</protein>
<gene>
    <name evidence="1" type="primary">atpH</name>
    <name type="ordered locus">HNE_1895</name>
</gene>
<sequence>MIQTSETAQRYARALFELAQDKGDLATIHKDFRAFAALIKTSADLRKLLDSPAFSRDVKVSALAEIAKKAGYSPLFGKFLGTMATNGRANDILGAEFAFDQFYAKQRGVQRAIVRTAKEMTGAEKSRIESLLARVVGGDVELTSEVDPSLIGGIQLRLGSKLVDASVAKKLERMNTVMKGA</sequence>
<reference key="1">
    <citation type="journal article" date="2006" name="J. Bacteriol.">
        <title>Comparative genomic evidence for a close relationship between the dimorphic prosthecate bacteria Hyphomonas neptunium and Caulobacter crescentus.</title>
        <authorList>
            <person name="Badger J.H."/>
            <person name="Hoover T.R."/>
            <person name="Brun Y.V."/>
            <person name="Weiner R.M."/>
            <person name="Laub M.T."/>
            <person name="Alexandre G."/>
            <person name="Mrazek J."/>
            <person name="Ren Q."/>
            <person name="Paulsen I.T."/>
            <person name="Nelson K.E."/>
            <person name="Khouri H.M."/>
            <person name="Radune D."/>
            <person name="Sosa J."/>
            <person name="Dodson R.J."/>
            <person name="Sullivan S.A."/>
            <person name="Rosovitz M.J."/>
            <person name="Madupu R."/>
            <person name="Brinkac L.M."/>
            <person name="Durkin A.S."/>
            <person name="Daugherty S.C."/>
            <person name="Kothari S.P."/>
            <person name="Giglio M.G."/>
            <person name="Zhou L."/>
            <person name="Haft D.H."/>
            <person name="Selengut J.D."/>
            <person name="Davidsen T.M."/>
            <person name="Yang Q."/>
            <person name="Zafar N."/>
            <person name="Ward N.L."/>
        </authorList>
    </citation>
    <scope>NUCLEOTIDE SEQUENCE [LARGE SCALE GENOMIC DNA]</scope>
    <source>
        <strain>ATCC 15444</strain>
    </source>
</reference>
<dbReference type="EMBL" id="CP000158">
    <property type="protein sequence ID" value="ABI76340.1"/>
    <property type="molecule type" value="Genomic_DNA"/>
</dbReference>
<dbReference type="RefSeq" id="WP_011646896.1">
    <property type="nucleotide sequence ID" value="NC_008358.1"/>
</dbReference>
<dbReference type="SMR" id="Q0C0Z7"/>
<dbReference type="STRING" id="228405.HNE_1895"/>
<dbReference type="KEGG" id="hne:HNE_1895"/>
<dbReference type="eggNOG" id="COG0712">
    <property type="taxonomic scope" value="Bacteria"/>
</dbReference>
<dbReference type="HOGENOM" id="CLU_085114_1_1_5"/>
<dbReference type="Proteomes" id="UP000001959">
    <property type="component" value="Chromosome"/>
</dbReference>
<dbReference type="GO" id="GO:0005886">
    <property type="term" value="C:plasma membrane"/>
    <property type="evidence" value="ECO:0007669"/>
    <property type="project" value="UniProtKB-SubCell"/>
</dbReference>
<dbReference type="GO" id="GO:0045259">
    <property type="term" value="C:proton-transporting ATP synthase complex"/>
    <property type="evidence" value="ECO:0007669"/>
    <property type="project" value="UniProtKB-KW"/>
</dbReference>
<dbReference type="GO" id="GO:0046933">
    <property type="term" value="F:proton-transporting ATP synthase activity, rotational mechanism"/>
    <property type="evidence" value="ECO:0007669"/>
    <property type="project" value="UniProtKB-UniRule"/>
</dbReference>
<dbReference type="Gene3D" id="1.10.520.20">
    <property type="entry name" value="N-terminal domain of the delta subunit of the F1F0-ATP synthase"/>
    <property type="match status" value="1"/>
</dbReference>
<dbReference type="HAMAP" id="MF_01416">
    <property type="entry name" value="ATP_synth_delta_bact"/>
    <property type="match status" value="1"/>
</dbReference>
<dbReference type="InterPro" id="IPR026015">
    <property type="entry name" value="ATP_synth_OSCP/delta_N_sf"/>
</dbReference>
<dbReference type="InterPro" id="IPR020781">
    <property type="entry name" value="ATPase_OSCP/d_CS"/>
</dbReference>
<dbReference type="InterPro" id="IPR000711">
    <property type="entry name" value="ATPase_OSCP/dsu"/>
</dbReference>
<dbReference type="NCBIfam" id="TIGR01145">
    <property type="entry name" value="ATP_synt_delta"/>
    <property type="match status" value="1"/>
</dbReference>
<dbReference type="PANTHER" id="PTHR11910">
    <property type="entry name" value="ATP SYNTHASE DELTA CHAIN"/>
    <property type="match status" value="1"/>
</dbReference>
<dbReference type="Pfam" id="PF00213">
    <property type="entry name" value="OSCP"/>
    <property type="match status" value="1"/>
</dbReference>
<dbReference type="PRINTS" id="PR00125">
    <property type="entry name" value="ATPASEDELTA"/>
</dbReference>
<dbReference type="SUPFAM" id="SSF47928">
    <property type="entry name" value="N-terminal domain of the delta subunit of the F1F0-ATP synthase"/>
    <property type="match status" value="1"/>
</dbReference>
<dbReference type="PROSITE" id="PS00389">
    <property type="entry name" value="ATPASE_DELTA"/>
    <property type="match status" value="1"/>
</dbReference>
<name>ATPD_HYPNA</name>
<organism>
    <name type="scientific">Hyphomonas neptunium (strain ATCC 15444)</name>
    <dbReference type="NCBI Taxonomy" id="228405"/>
    <lineage>
        <taxon>Bacteria</taxon>
        <taxon>Pseudomonadati</taxon>
        <taxon>Pseudomonadota</taxon>
        <taxon>Alphaproteobacteria</taxon>
        <taxon>Hyphomonadales</taxon>
        <taxon>Hyphomonadaceae</taxon>
        <taxon>Hyphomonas</taxon>
    </lineage>
</organism>
<proteinExistence type="inferred from homology"/>